<comment type="catalytic activity">
    <reaction>
        <text>Hydrolysis of (1-&gt;4)-beta-linkages between N-acetylmuramic acid and N-acetyl-D-glucosamine residues in a peptidoglycan and between N-acetyl-D-glucosamine residues in chitodextrins.</text>
        <dbReference type="EC" id="3.2.1.17"/>
    </reaction>
</comment>
<comment type="subunit">
    <text>Monomer.</text>
</comment>
<comment type="subcellular location">
    <subcellularLocation>
        <location>Secreted</location>
    </subcellularLocation>
    <subcellularLocation>
        <location>Cytoplasm</location>
    </subcellularLocation>
</comment>
<comment type="similarity">
    <text evidence="2">Belongs to the glycosyl hydrolase 25 family.</text>
</comment>
<keyword id="KW-0929">Antimicrobial</keyword>
<keyword id="KW-0081">Bacteriolytic enzyme</keyword>
<keyword id="KW-0963">Cytoplasm</keyword>
<keyword id="KW-0903">Direct protein sequencing</keyword>
<keyword id="KW-0326">Glycosidase</keyword>
<keyword id="KW-0378">Hydrolase</keyword>
<keyword id="KW-1185">Reference proteome</keyword>
<keyword id="KW-0677">Repeat</keyword>
<keyword id="KW-0964">Secreted</keyword>
<gene>
    <name type="primary">lyc</name>
    <name type="ordered locus">CA_C0554</name>
</gene>
<evidence type="ECO:0000255" key="1">
    <source>
        <dbReference type="PROSITE-ProRule" id="PRU10065"/>
    </source>
</evidence>
<evidence type="ECO:0000305" key="2"/>
<accession>P34020</accession>
<sequence length="324" mass="34978">MKGIDIYSGQGSVDFNAVKESGVEVVYIKATEGLTYTDSTYKDFYDGAKNAGLKIGFYHYLRANDPTSEAEHFFNTISGLSLDCKCAIDVEVTLGQSIDQISSNVRKFADYLINKGLDVCVYTYTNFYKDNLNSTVKDLPLWIAEYGVSKPNIDASYVGFQYSDSGSVNGISGSADLDEFSEGILVGGTVVIDPGQGGDDNIKAIQQDLNILLKRGLEVDGIEGPETEAAIKDFQSIMGLTVDGIWGTNTSGAAQQIFSRPLDGVAYPHYEYATRYIQYRVGASVDGTFGSGTKAKVAAWQSNQGLMADGVVGSATWSKLLDEN</sequence>
<name>LYS_CLOAB</name>
<proteinExistence type="evidence at protein level"/>
<organism>
    <name type="scientific">Clostridium acetobutylicum (strain ATCC 824 / DSM 792 / JCM 1419 / IAM 19013 / LMG 5710 / NBRC 13948 / NRRL B-527 / VKM B-1787 / 2291 / W)</name>
    <dbReference type="NCBI Taxonomy" id="272562"/>
    <lineage>
        <taxon>Bacteria</taxon>
        <taxon>Bacillati</taxon>
        <taxon>Bacillota</taxon>
        <taxon>Clostridia</taxon>
        <taxon>Eubacteriales</taxon>
        <taxon>Clostridiaceae</taxon>
        <taxon>Clostridium</taxon>
    </lineage>
</organism>
<reference key="1">
    <citation type="journal article" date="1991" name="Gene">
        <title>Sequence of the lyc gene encoding the autolytic lysozyme of Clostridium acetobutylicum ATCC824: comparison with other lytic enzymes.</title>
        <authorList>
            <person name="Croux C."/>
            <person name="Garcia J.L."/>
        </authorList>
    </citation>
    <scope>NUCLEOTIDE SEQUENCE [GENOMIC DNA]</scope>
    <source>
        <strain>ATCC 824 / DSM 792 / JCM 1419 / IAM 19013 / LMG 5710 / NBRC 13948 / NRRL B-527 / VKM B-1787 / 2291 / W</strain>
    </source>
</reference>
<reference key="2">
    <citation type="journal article" date="2001" name="J. Bacteriol.">
        <title>Genome sequence and comparative analysis of the solvent-producing bacterium Clostridium acetobutylicum.</title>
        <authorList>
            <person name="Noelling J."/>
            <person name="Breton G."/>
            <person name="Omelchenko M.V."/>
            <person name="Makarova K.S."/>
            <person name="Zeng Q."/>
            <person name="Gibson R."/>
            <person name="Lee H.M."/>
            <person name="Dubois J."/>
            <person name="Qiu D."/>
            <person name="Hitti J."/>
            <person name="Wolf Y.I."/>
            <person name="Tatusov R.L."/>
            <person name="Sabathe F."/>
            <person name="Doucette-Stamm L.A."/>
            <person name="Soucaille P."/>
            <person name="Daly M.J."/>
            <person name="Bennett G.N."/>
            <person name="Koonin E.V."/>
            <person name="Smith D.R."/>
        </authorList>
    </citation>
    <scope>NUCLEOTIDE SEQUENCE [LARGE SCALE GENOMIC DNA]</scope>
    <source>
        <strain>ATCC 824 / DSM 792 / JCM 1419 / IAM 19013 / LMG 5710 / NBRC 13948 / NRRL B-527 / VKM B-1787 / 2291 / W</strain>
    </source>
</reference>
<reference key="3">
    <citation type="journal article" date="1992" name="Appl. Environ. Microbiol.">
        <title>Purification and characterization of an extracellular muramidase of Clostridium acetobutylicum ATCC 824 that acts on non-N-acetylated peptidoglycan.</title>
        <authorList>
            <person name="Croux C."/>
            <person name="Canard B."/>
            <person name="Goma G."/>
            <person name="Soucaille P."/>
        </authorList>
    </citation>
    <scope>PROTEIN SEQUENCE OF 1-23</scope>
    <scope>CHARACTERIZATION</scope>
    <source>
        <strain>ATCC 824 / DSM 792 / JCM 1419 / IAM 19013 / LMG 5710 / NBRC 13948 / NRRL B-527 / VKM B-1787 / 2291 / W</strain>
    </source>
</reference>
<reference key="4">
    <citation type="journal article" date="1992" name="J. Gen. Microbiol.">
        <title>Autolysis of Clostridium acetobutylicum ATCC 824.</title>
        <authorList>
            <person name="Croux C."/>
            <person name="Canard B."/>
            <person name="Goma G."/>
            <person name="Soucaille P."/>
        </authorList>
    </citation>
    <scope>CHARACTERIZATION</scope>
    <source>
        <strain>ATCC 824 / DSM 792 / JCM 1419 / IAM 19013 / LMG 5710 / NBRC 13948 / NRRL B-527 / VKM B-1787 / 2291 / W</strain>
    </source>
</reference>
<feature type="chain" id="PRO_0000208264" description="Autolytic lysozyme">
    <location>
        <begin position="1"/>
        <end position="324"/>
    </location>
</feature>
<feature type="repeat" description="1">
    <location>
        <begin position="212"/>
        <end position="234"/>
    </location>
</feature>
<feature type="repeat" description="2">
    <location>
        <begin position="235"/>
        <end position="254"/>
    </location>
</feature>
<feature type="repeat" description="3">
    <location>
        <begin position="255"/>
        <end position="277"/>
    </location>
</feature>
<feature type="repeat" description="4">
    <location>
        <begin position="278"/>
        <end position="300"/>
    </location>
</feature>
<feature type="repeat" description="5">
    <location>
        <begin position="301"/>
        <end position="324"/>
    </location>
</feature>
<feature type="region of interest" description="5 X 23 AA tandem repeats">
    <location>
        <begin position="212"/>
        <end position="324"/>
    </location>
</feature>
<feature type="active site" evidence="1">
    <location>
        <position position="5"/>
    </location>
</feature>
<feature type="active site" evidence="1">
    <location>
        <position position="91"/>
    </location>
</feature>
<dbReference type="EC" id="3.2.1.17"/>
<dbReference type="EMBL" id="M68865">
    <property type="protein sequence ID" value="AAA23250.1"/>
    <property type="molecule type" value="Genomic_DNA"/>
</dbReference>
<dbReference type="EMBL" id="AE001437">
    <property type="protein sequence ID" value="AAK78533.1"/>
    <property type="molecule type" value="Genomic_DNA"/>
</dbReference>
<dbReference type="PIR" id="B96968">
    <property type="entry name" value="B96968"/>
</dbReference>
<dbReference type="PIR" id="JH0441">
    <property type="entry name" value="JH0441"/>
</dbReference>
<dbReference type="RefSeq" id="NP_347193.1">
    <property type="nucleotide sequence ID" value="NC_003030.1"/>
</dbReference>
<dbReference type="RefSeq" id="WP_010963875.1">
    <property type="nucleotide sequence ID" value="NC_003030.1"/>
</dbReference>
<dbReference type="SMR" id="P34020"/>
<dbReference type="STRING" id="272562.CA_C0554"/>
<dbReference type="CAZy" id="GH25">
    <property type="family name" value="Glycoside Hydrolase Family 25"/>
</dbReference>
<dbReference type="KEGG" id="cac:CA_C0554"/>
<dbReference type="PATRIC" id="fig|272562.8.peg.759"/>
<dbReference type="eggNOG" id="COG3409">
    <property type="taxonomic scope" value="Bacteria"/>
</dbReference>
<dbReference type="eggNOG" id="COG3757">
    <property type="taxonomic scope" value="Bacteria"/>
</dbReference>
<dbReference type="HOGENOM" id="CLU_044973_2_0_9"/>
<dbReference type="OrthoDB" id="9800780at2"/>
<dbReference type="Proteomes" id="UP000000814">
    <property type="component" value="Chromosome"/>
</dbReference>
<dbReference type="GO" id="GO:0005737">
    <property type="term" value="C:cytoplasm"/>
    <property type="evidence" value="ECO:0007669"/>
    <property type="project" value="UniProtKB-SubCell"/>
</dbReference>
<dbReference type="GO" id="GO:0005576">
    <property type="term" value="C:extracellular region"/>
    <property type="evidence" value="ECO:0007669"/>
    <property type="project" value="UniProtKB-SubCell"/>
</dbReference>
<dbReference type="GO" id="GO:0003796">
    <property type="term" value="F:lysozyme activity"/>
    <property type="evidence" value="ECO:0007669"/>
    <property type="project" value="UniProtKB-EC"/>
</dbReference>
<dbReference type="GO" id="GO:0016052">
    <property type="term" value="P:carbohydrate catabolic process"/>
    <property type="evidence" value="ECO:0007669"/>
    <property type="project" value="TreeGrafter"/>
</dbReference>
<dbReference type="GO" id="GO:0016998">
    <property type="term" value="P:cell wall macromolecule catabolic process"/>
    <property type="evidence" value="ECO:0007669"/>
    <property type="project" value="InterPro"/>
</dbReference>
<dbReference type="GO" id="GO:0042742">
    <property type="term" value="P:defense response to bacterium"/>
    <property type="evidence" value="ECO:0007669"/>
    <property type="project" value="UniProtKB-KW"/>
</dbReference>
<dbReference type="GO" id="GO:0031640">
    <property type="term" value="P:killing of cells of another organism"/>
    <property type="evidence" value="ECO:0007669"/>
    <property type="project" value="UniProtKB-KW"/>
</dbReference>
<dbReference type="GO" id="GO:0009253">
    <property type="term" value="P:peptidoglycan catabolic process"/>
    <property type="evidence" value="ECO:0007669"/>
    <property type="project" value="InterPro"/>
</dbReference>
<dbReference type="CDD" id="cd06525">
    <property type="entry name" value="GH25_Lyc-like"/>
    <property type="match status" value="1"/>
</dbReference>
<dbReference type="Gene3D" id="3.20.20.80">
    <property type="entry name" value="Glycosidases"/>
    <property type="match status" value="1"/>
</dbReference>
<dbReference type="Gene3D" id="1.10.101.10">
    <property type="entry name" value="PGBD-like superfamily/PGBD"/>
    <property type="match status" value="2"/>
</dbReference>
<dbReference type="InterPro" id="IPR002053">
    <property type="entry name" value="Glyco_hydro_25"/>
</dbReference>
<dbReference type="InterPro" id="IPR008270">
    <property type="entry name" value="Glyco_hydro_25_AS"/>
</dbReference>
<dbReference type="InterPro" id="IPR018077">
    <property type="entry name" value="Glyco_hydro_fam25_subgr"/>
</dbReference>
<dbReference type="InterPro" id="IPR017853">
    <property type="entry name" value="Glycoside_hydrolase_SF"/>
</dbReference>
<dbReference type="InterPro" id="IPR002477">
    <property type="entry name" value="Peptidoglycan-bd-like"/>
</dbReference>
<dbReference type="InterPro" id="IPR036365">
    <property type="entry name" value="PGBD-like_sf"/>
</dbReference>
<dbReference type="InterPro" id="IPR036366">
    <property type="entry name" value="PGBDSf"/>
</dbReference>
<dbReference type="PANTHER" id="PTHR34135">
    <property type="entry name" value="LYSOZYME"/>
    <property type="match status" value="1"/>
</dbReference>
<dbReference type="PANTHER" id="PTHR34135:SF2">
    <property type="entry name" value="LYSOZYME"/>
    <property type="match status" value="1"/>
</dbReference>
<dbReference type="Pfam" id="PF01183">
    <property type="entry name" value="Glyco_hydro_25"/>
    <property type="match status" value="1"/>
</dbReference>
<dbReference type="Pfam" id="PF01471">
    <property type="entry name" value="PG_binding_1"/>
    <property type="match status" value="2"/>
</dbReference>
<dbReference type="SMART" id="SM00641">
    <property type="entry name" value="Glyco_25"/>
    <property type="match status" value="2"/>
</dbReference>
<dbReference type="SUPFAM" id="SSF51445">
    <property type="entry name" value="(Trans)glycosidases"/>
    <property type="match status" value="1"/>
</dbReference>
<dbReference type="SUPFAM" id="SSF47090">
    <property type="entry name" value="PGBD-like"/>
    <property type="match status" value="2"/>
</dbReference>
<dbReference type="PROSITE" id="PS00953">
    <property type="entry name" value="GLYCOSYL_HYDROL_F25_1"/>
    <property type="match status" value="1"/>
</dbReference>
<dbReference type="PROSITE" id="PS51904">
    <property type="entry name" value="GLYCOSYL_HYDROL_F25_2"/>
    <property type="match status" value="1"/>
</dbReference>
<protein>
    <recommendedName>
        <fullName>Autolytic lysozyme</fullName>
        <ecNumber>3.2.1.17</ecNumber>
    </recommendedName>
    <alternativeName>
        <fullName>1,4-beta-N-acetylmuramidase</fullName>
    </alternativeName>
    <alternativeName>
        <fullName>Autolysin</fullName>
    </alternativeName>
</protein>